<proteinExistence type="evidence at protein level"/>
<reference key="1">
    <citation type="journal article" date="2000" name="Nature">
        <title>Sequence and analysis of chromosome 3 of the plant Arabidopsis thaliana.</title>
        <authorList>
            <person name="Salanoubat M."/>
            <person name="Lemcke K."/>
            <person name="Rieger M."/>
            <person name="Ansorge W."/>
            <person name="Unseld M."/>
            <person name="Fartmann B."/>
            <person name="Valle G."/>
            <person name="Bloecker H."/>
            <person name="Perez-Alonso M."/>
            <person name="Obermaier B."/>
            <person name="Delseny M."/>
            <person name="Boutry M."/>
            <person name="Grivell L.A."/>
            <person name="Mache R."/>
            <person name="Puigdomenech P."/>
            <person name="De Simone V."/>
            <person name="Choisne N."/>
            <person name="Artiguenave F."/>
            <person name="Robert C."/>
            <person name="Brottier P."/>
            <person name="Wincker P."/>
            <person name="Cattolico L."/>
            <person name="Weissenbach J."/>
            <person name="Saurin W."/>
            <person name="Quetier F."/>
            <person name="Schaefer M."/>
            <person name="Mueller-Auer S."/>
            <person name="Gabel C."/>
            <person name="Fuchs M."/>
            <person name="Benes V."/>
            <person name="Wurmbach E."/>
            <person name="Drzonek H."/>
            <person name="Erfle H."/>
            <person name="Jordan N."/>
            <person name="Bangert S."/>
            <person name="Wiedelmann R."/>
            <person name="Kranz H."/>
            <person name="Voss H."/>
            <person name="Holland R."/>
            <person name="Brandt P."/>
            <person name="Nyakatura G."/>
            <person name="Vezzi A."/>
            <person name="D'Angelo M."/>
            <person name="Pallavicini A."/>
            <person name="Toppo S."/>
            <person name="Simionati B."/>
            <person name="Conrad A."/>
            <person name="Hornischer K."/>
            <person name="Kauer G."/>
            <person name="Loehnert T.-H."/>
            <person name="Nordsiek G."/>
            <person name="Reichelt J."/>
            <person name="Scharfe M."/>
            <person name="Schoen O."/>
            <person name="Bargues M."/>
            <person name="Terol J."/>
            <person name="Climent J."/>
            <person name="Navarro P."/>
            <person name="Collado C."/>
            <person name="Perez-Perez A."/>
            <person name="Ottenwaelder B."/>
            <person name="Duchemin D."/>
            <person name="Cooke R."/>
            <person name="Laudie M."/>
            <person name="Berger-Llauro C."/>
            <person name="Purnelle B."/>
            <person name="Masuy D."/>
            <person name="de Haan M."/>
            <person name="Maarse A.C."/>
            <person name="Alcaraz J.-P."/>
            <person name="Cottet A."/>
            <person name="Casacuberta E."/>
            <person name="Monfort A."/>
            <person name="Argiriou A."/>
            <person name="Flores M."/>
            <person name="Liguori R."/>
            <person name="Vitale D."/>
            <person name="Mannhaupt G."/>
            <person name="Haase D."/>
            <person name="Schoof H."/>
            <person name="Rudd S."/>
            <person name="Zaccaria P."/>
            <person name="Mewes H.-W."/>
            <person name="Mayer K.F.X."/>
            <person name="Kaul S."/>
            <person name="Town C.D."/>
            <person name="Koo H.L."/>
            <person name="Tallon L.J."/>
            <person name="Jenkins J."/>
            <person name="Rooney T."/>
            <person name="Rizzo M."/>
            <person name="Walts A."/>
            <person name="Utterback T."/>
            <person name="Fujii C.Y."/>
            <person name="Shea T.P."/>
            <person name="Creasy T.H."/>
            <person name="Haas B."/>
            <person name="Maiti R."/>
            <person name="Wu D."/>
            <person name="Peterson J."/>
            <person name="Van Aken S."/>
            <person name="Pai G."/>
            <person name="Militscher J."/>
            <person name="Sellers P."/>
            <person name="Gill J.E."/>
            <person name="Feldblyum T.V."/>
            <person name="Preuss D."/>
            <person name="Lin X."/>
            <person name="Nierman W.C."/>
            <person name="Salzberg S.L."/>
            <person name="White O."/>
            <person name="Venter J.C."/>
            <person name="Fraser C.M."/>
            <person name="Kaneko T."/>
            <person name="Nakamura Y."/>
            <person name="Sato S."/>
            <person name="Kato T."/>
            <person name="Asamizu E."/>
            <person name="Sasamoto S."/>
            <person name="Kimura T."/>
            <person name="Idesawa K."/>
            <person name="Kawashima K."/>
            <person name="Kishida Y."/>
            <person name="Kiyokawa C."/>
            <person name="Kohara M."/>
            <person name="Matsumoto M."/>
            <person name="Matsuno A."/>
            <person name="Muraki A."/>
            <person name="Nakayama S."/>
            <person name="Nakazaki N."/>
            <person name="Shinpo S."/>
            <person name="Takeuchi C."/>
            <person name="Wada T."/>
            <person name="Watanabe A."/>
            <person name="Yamada M."/>
            <person name="Yasuda M."/>
            <person name="Tabata S."/>
        </authorList>
    </citation>
    <scope>NUCLEOTIDE SEQUENCE [LARGE SCALE GENOMIC DNA]</scope>
    <source>
        <strain>cv. Columbia</strain>
    </source>
</reference>
<reference key="2">
    <citation type="journal article" date="2017" name="Plant J.">
        <title>Araport11: a complete reannotation of the Arabidopsis thaliana reference genome.</title>
        <authorList>
            <person name="Cheng C.Y."/>
            <person name="Krishnakumar V."/>
            <person name="Chan A.P."/>
            <person name="Thibaud-Nissen F."/>
            <person name="Schobel S."/>
            <person name="Town C.D."/>
        </authorList>
    </citation>
    <scope>GENOME REANNOTATION</scope>
    <source>
        <strain>cv. Columbia</strain>
    </source>
</reference>
<reference key="3">
    <citation type="journal article" date="2003" name="Science">
        <title>Empirical analysis of transcriptional activity in the Arabidopsis genome.</title>
        <authorList>
            <person name="Yamada K."/>
            <person name="Lim J."/>
            <person name="Dale J.M."/>
            <person name="Chen H."/>
            <person name="Shinn P."/>
            <person name="Palm C.J."/>
            <person name="Southwick A.M."/>
            <person name="Wu H.C."/>
            <person name="Kim C.J."/>
            <person name="Nguyen M."/>
            <person name="Pham P.K."/>
            <person name="Cheuk R.F."/>
            <person name="Karlin-Newmann G."/>
            <person name="Liu S.X."/>
            <person name="Lam B."/>
            <person name="Sakano H."/>
            <person name="Wu T."/>
            <person name="Yu G."/>
            <person name="Miranda M."/>
            <person name="Quach H.L."/>
            <person name="Tripp M."/>
            <person name="Chang C.H."/>
            <person name="Lee J.M."/>
            <person name="Toriumi M.J."/>
            <person name="Chan M.M."/>
            <person name="Tang C.C."/>
            <person name="Onodera C.S."/>
            <person name="Deng J.M."/>
            <person name="Akiyama K."/>
            <person name="Ansari Y."/>
            <person name="Arakawa T."/>
            <person name="Banh J."/>
            <person name="Banno F."/>
            <person name="Bowser L."/>
            <person name="Brooks S.Y."/>
            <person name="Carninci P."/>
            <person name="Chao Q."/>
            <person name="Choy N."/>
            <person name="Enju A."/>
            <person name="Goldsmith A.D."/>
            <person name="Gurjal M."/>
            <person name="Hansen N.F."/>
            <person name="Hayashizaki Y."/>
            <person name="Johnson-Hopson C."/>
            <person name="Hsuan V.W."/>
            <person name="Iida K."/>
            <person name="Karnes M."/>
            <person name="Khan S."/>
            <person name="Koesema E."/>
            <person name="Ishida J."/>
            <person name="Jiang P.X."/>
            <person name="Jones T."/>
            <person name="Kawai J."/>
            <person name="Kamiya A."/>
            <person name="Meyers C."/>
            <person name="Nakajima M."/>
            <person name="Narusaka M."/>
            <person name="Seki M."/>
            <person name="Sakurai T."/>
            <person name="Satou M."/>
            <person name="Tamse R."/>
            <person name="Vaysberg M."/>
            <person name="Wallender E.K."/>
            <person name="Wong C."/>
            <person name="Yamamura Y."/>
            <person name="Yuan S."/>
            <person name="Shinozaki K."/>
            <person name="Davis R.W."/>
            <person name="Theologis A."/>
            <person name="Ecker J.R."/>
        </authorList>
    </citation>
    <scope>NUCLEOTIDE SEQUENCE [LARGE SCALE MRNA] (ISOFORM 1)</scope>
    <source>
        <strain>cv. Columbia</strain>
    </source>
</reference>
<reference key="4">
    <citation type="journal article" date="2009" name="DNA Res.">
        <title>Analysis of multiple occurrences of alternative splicing events in Arabidopsis thaliana using novel sequenced full-length cDNAs.</title>
        <authorList>
            <person name="Iida K."/>
            <person name="Fukami-Kobayashi K."/>
            <person name="Toyoda A."/>
            <person name="Sakaki Y."/>
            <person name="Kobayashi M."/>
            <person name="Seki M."/>
            <person name="Shinozaki K."/>
        </authorList>
    </citation>
    <scope>NUCLEOTIDE SEQUENCE [LARGE SCALE MRNA] (ISOFORM 2)</scope>
    <source>
        <strain>cv. Columbia</strain>
        <tissue evidence="10">Rosette leaf</tissue>
    </source>
</reference>
<reference key="5">
    <citation type="submission" date="2002-03" db="EMBL/GenBank/DDBJ databases">
        <title>Full-length cDNA from Arabidopsis thaliana.</title>
        <authorList>
            <person name="Brover V.V."/>
            <person name="Troukhan M.E."/>
            <person name="Alexandrov N.A."/>
            <person name="Lu Y.-P."/>
            <person name="Flavell R.B."/>
            <person name="Feldmann K.A."/>
        </authorList>
    </citation>
    <scope>NUCLEOTIDE SEQUENCE [LARGE SCALE MRNA] (ISOFORM 1)</scope>
</reference>
<reference key="6">
    <citation type="journal article" date="2006" name="BMC Genomics">
        <title>Cross genome comparisons of serine proteases in Arabidopsis and rice.</title>
        <authorList>
            <person name="Tripathi L.P."/>
            <person name="Sowdhamini R."/>
        </authorList>
    </citation>
    <scope>GENE FAMILY</scope>
    <scope>NOMENCLATURE</scope>
</reference>
<reference key="7">
    <citation type="journal article" date="2006" name="BMC Plant Biol.">
        <title>Protease gene families in Populus and Arabidopsis.</title>
        <authorList>
            <person name="Garcia-Lorenzo M."/>
            <person name="Sjodin A."/>
            <person name="Jansson S."/>
            <person name="Funk C."/>
        </authorList>
    </citation>
    <scope>GENE FAMILY</scope>
    <scope>NOMENCLATURE</scope>
</reference>
<reference key="8">
    <citation type="journal article" date="2007" name="Genome Res.">
        <title>Functional and evolutionary implications of enhanced genomic analysis of rhomboid intramembrane proteases.</title>
        <authorList>
            <person name="Lemberg M.K."/>
            <person name="Freeman M."/>
        </authorList>
    </citation>
    <scope>GENE FAMILY</scope>
    <scope>NOMENCLATURE</scope>
</reference>
<reference key="9">
    <citation type="journal article" date="2009" name="Plant Physiol.">
        <title>Large-scale Arabidopsis phosphoproteome profiling reveals novel chloroplast kinase substrates and phosphorylation networks.</title>
        <authorList>
            <person name="Reiland S."/>
            <person name="Messerli G."/>
            <person name="Baerenfaller K."/>
            <person name="Gerrits B."/>
            <person name="Endler A."/>
            <person name="Grossmann J."/>
            <person name="Gruissem W."/>
            <person name="Baginsky S."/>
        </authorList>
    </citation>
    <scope>IDENTIFICATION BY MASS SPECTROMETRY [LARGE SCALE ANALYSIS]</scope>
</reference>
<reference key="10">
    <citation type="journal article" date="2012" name="Physiol. Plantarum">
        <title>Rhomboid proteases in plants - still in square one?</title>
        <authorList>
            <person name="Knopf R.R."/>
            <person name="Adam Z."/>
        </authorList>
    </citation>
    <scope>REVIEW</scope>
</reference>
<reference key="11">
    <citation type="submission" date="2004-01" db="PDB data bank">
        <title>Solution structure of RSGI RUH-014, a UBA domain of Arabidopsis thaliana cDNA.</title>
        <authorList>
            <consortium name="RIKEN structural genomics initiative (RSGI)"/>
        </authorList>
    </citation>
    <scope>STRUCTURE BY NMR OF 342-401</scope>
</reference>
<protein>
    <recommendedName>
        <fullName evidence="5">Rhomboid-like protein 15</fullName>
        <shortName evidence="5">AtRBL15</shortName>
        <ecNumber evidence="8">3.4.21.-</ecNumber>
    </recommendedName>
</protein>
<feature type="chain" id="PRO_0000220607" description="Rhomboid-like protein 15">
    <location>
        <begin position="1"/>
        <end position="403"/>
    </location>
</feature>
<feature type="transmembrane region" description="Helical" evidence="2">
    <location>
        <begin position="22"/>
        <end position="42"/>
    </location>
</feature>
<feature type="transmembrane region" description="Helical" evidence="2">
    <location>
        <begin position="70"/>
        <end position="90"/>
    </location>
</feature>
<feature type="transmembrane region" description="Helical" evidence="2">
    <location>
        <begin position="103"/>
        <end position="123"/>
    </location>
</feature>
<feature type="transmembrane region" description="Helical" evidence="2">
    <location>
        <begin position="141"/>
        <end position="161"/>
    </location>
</feature>
<feature type="transmembrane region" description="Helical" evidence="2">
    <location>
        <begin position="176"/>
        <end position="196"/>
    </location>
</feature>
<feature type="transmembrane region" description="Helical" evidence="2">
    <location>
        <begin position="198"/>
        <end position="218"/>
    </location>
</feature>
<feature type="domain" description="UBA" evidence="3">
    <location>
        <begin position="361"/>
        <end position="401"/>
    </location>
</feature>
<feature type="region of interest" description="Disordered" evidence="4">
    <location>
        <begin position="282"/>
        <end position="316"/>
    </location>
</feature>
<feature type="active site" description="Nucleophile" evidence="1">
    <location>
        <position position="145"/>
    </location>
</feature>
<feature type="active site" description="Charge relay system" evidence="1">
    <location>
        <position position="197"/>
    </location>
</feature>
<feature type="splice variant" id="VSP_057725" description="In isoform 2.">
    <original>GRVAA</original>
    <variation>VTFLL</variation>
    <location>
        <begin position="358"/>
        <end position="362"/>
    </location>
</feature>
<feature type="splice variant" id="VSP_057726" description="In isoform 2.">
    <location>
        <begin position="363"/>
        <end position="403"/>
    </location>
</feature>
<feature type="sequence conflict" description="In Ref. 3; AAM65024." evidence="8" ref="3">
    <original>R</original>
    <variation>Q</variation>
    <location>
        <position position="237"/>
    </location>
</feature>
<feature type="strand" evidence="12">
    <location>
        <begin position="354"/>
        <end position="356"/>
    </location>
</feature>
<feature type="helix" evidence="12">
    <location>
        <begin position="364"/>
        <end position="371"/>
    </location>
</feature>
<feature type="turn" evidence="12">
    <location>
        <begin position="372"/>
        <end position="374"/>
    </location>
</feature>
<feature type="helix" evidence="12">
    <location>
        <begin position="377"/>
        <end position="387"/>
    </location>
</feature>
<feature type="helix" evidence="12">
    <location>
        <begin position="391"/>
        <end position="399"/>
    </location>
</feature>
<comment type="function">
    <text evidence="7">Probable rhomboid-type serine protease that catalyzes intramembrane proteolysis. May function in senescence.</text>
</comment>
<comment type="subcellular location">
    <subcellularLocation>
        <location evidence="8">Membrane</location>
        <topology evidence="8">Multi-pass membrane protein</topology>
    </subcellularLocation>
</comment>
<comment type="alternative products">
    <event type="alternative splicing"/>
    <isoform>
        <id>Q8LB17-1</id>
        <name>1</name>
        <sequence type="displayed"/>
    </isoform>
    <isoform>
        <id>Q8LB17-2</id>
        <name>2</name>
        <sequence type="described" ref="VSP_057725 VSP_057726"/>
    </isoform>
</comment>
<comment type="similarity">
    <text evidence="8">Belongs to the peptidase S54 family.</text>
</comment>
<comment type="sequence caution" evidence="8">
    <conflict type="erroneous gene model prediction">
        <sequence resource="EMBL-CDS" id="CAB68184"/>
    </conflict>
</comment>
<organism>
    <name type="scientific">Arabidopsis thaliana</name>
    <name type="common">Mouse-ear cress</name>
    <dbReference type="NCBI Taxonomy" id="3702"/>
    <lineage>
        <taxon>Eukaryota</taxon>
        <taxon>Viridiplantae</taxon>
        <taxon>Streptophyta</taxon>
        <taxon>Embryophyta</taxon>
        <taxon>Tracheophyta</taxon>
        <taxon>Spermatophyta</taxon>
        <taxon>Magnoliopsida</taxon>
        <taxon>eudicotyledons</taxon>
        <taxon>Gunneridae</taxon>
        <taxon>Pentapetalae</taxon>
        <taxon>rosids</taxon>
        <taxon>malvids</taxon>
        <taxon>Brassicales</taxon>
        <taxon>Brassicaceae</taxon>
        <taxon>Camelineae</taxon>
        <taxon>Arabidopsis</taxon>
    </lineage>
</organism>
<dbReference type="EC" id="3.4.21.-" evidence="8"/>
<dbReference type="EMBL" id="AL137082">
    <property type="protein sequence ID" value="CAB68184.1"/>
    <property type="status" value="ALT_SEQ"/>
    <property type="molecule type" value="Genomic_DNA"/>
</dbReference>
<dbReference type="EMBL" id="CP002686">
    <property type="protein sequence ID" value="AEE79784.1"/>
    <property type="molecule type" value="Genomic_DNA"/>
</dbReference>
<dbReference type="EMBL" id="AY136386">
    <property type="protein sequence ID" value="AAM97052.1"/>
    <property type="molecule type" value="mRNA"/>
</dbReference>
<dbReference type="EMBL" id="BT000186">
    <property type="protein sequence ID" value="AAN15505.1"/>
    <property type="molecule type" value="mRNA"/>
</dbReference>
<dbReference type="EMBL" id="AK318905">
    <property type="protein sequence ID" value="BAH57020.1"/>
    <property type="molecule type" value="mRNA"/>
</dbReference>
<dbReference type="EMBL" id="AY087480">
    <property type="protein sequence ID" value="AAM65024.1"/>
    <property type="molecule type" value="mRNA"/>
</dbReference>
<dbReference type="PIR" id="T45666">
    <property type="entry name" value="T45666"/>
</dbReference>
<dbReference type="RefSeq" id="NP_567064.1">
    <molecule id="Q8LB17-1"/>
    <property type="nucleotide sequence ID" value="NM_115708.4"/>
</dbReference>
<dbReference type="PDB" id="1VG5">
    <property type="method" value="NMR"/>
    <property type="chains" value="A=342-401"/>
</dbReference>
<dbReference type="PDBsum" id="1VG5"/>
<dbReference type="SMR" id="Q8LB17"/>
<dbReference type="BioGRID" id="10330">
    <property type="interactions" value="8"/>
</dbReference>
<dbReference type="FunCoup" id="Q8LB17">
    <property type="interactions" value="1842"/>
</dbReference>
<dbReference type="IntAct" id="Q8LB17">
    <property type="interactions" value="8"/>
</dbReference>
<dbReference type="STRING" id="3702.Q8LB17"/>
<dbReference type="iPTMnet" id="Q8LB17"/>
<dbReference type="PaxDb" id="3702-AT3G58460.2"/>
<dbReference type="ProteomicsDB" id="236512">
    <molecule id="Q8LB17-1"/>
</dbReference>
<dbReference type="EnsemblPlants" id="AT3G58460.1">
    <molecule id="Q8LB17-1"/>
    <property type="protein sequence ID" value="AT3G58460.1"/>
    <property type="gene ID" value="AT3G58460"/>
</dbReference>
<dbReference type="GeneID" id="825015"/>
<dbReference type="Gramene" id="AT3G58460.1">
    <molecule id="Q8LB17-1"/>
    <property type="protein sequence ID" value="AT3G58460.1"/>
    <property type="gene ID" value="AT3G58460"/>
</dbReference>
<dbReference type="KEGG" id="ath:AT3G58460"/>
<dbReference type="Araport" id="AT3G58460"/>
<dbReference type="TAIR" id="AT3G58460">
    <property type="gene designation" value="RBL15"/>
</dbReference>
<dbReference type="eggNOG" id="KOG2632">
    <property type="taxonomic scope" value="Eukaryota"/>
</dbReference>
<dbReference type="HOGENOM" id="CLU_036445_1_0_1"/>
<dbReference type="InParanoid" id="Q8LB17"/>
<dbReference type="OMA" id="TRVNQWW"/>
<dbReference type="PhylomeDB" id="Q8LB17"/>
<dbReference type="EvolutionaryTrace" id="Q8LB17"/>
<dbReference type="PRO" id="PR:Q8LB17"/>
<dbReference type="Proteomes" id="UP000006548">
    <property type="component" value="Chromosome 3"/>
</dbReference>
<dbReference type="ExpressionAtlas" id="Q8LB17">
    <property type="expression patterns" value="baseline and differential"/>
</dbReference>
<dbReference type="GO" id="GO:0016020">
    <property type="term" value="C:membrane"/>
    <property type="evidence" value="ECO:0007669"/>
    <property type="project" value="UniProtKB-SubCell"/>
</dbReference>
<dbReference type="GO" id="GO:0004252">
    <property type="term" value="F:serine-type endopeptidase activity"/>
    <property type="evidence" value="ECO:0007669"/>
    <property type="project" value="InterPro"/>
</dbReference>
<dbReference type="GO" id="GO:0006508">
    <property type="term" value="P:proteolysis"/>
    <property type="evidence" value="ECO:0007669"/>
    <property type="project" value="UniProtKB-KW"/>
</dbReference>
<dbReference type="CDD" id="cd14287">
    <property type="entry name" value="UBA_At3g58460_like"/>
    <property type="match status" value="1"/>
</dbReference>
<dbReference type="FunFam" id="1.20.1540.10:FF:000010">
    <property type="entry name" value="Rhomboid-like protein 15"/>
    <property type="match status" value="1"/>
</dbReference>
<dbReference type="Gene3D" id="1.10.8.10">
    <property type="entry name" value="DNA helicase RuvA subunit, C-terminal domain"/>
    <property type="match status" value="1"/>
</dbReference>
<dbReference type="Gene3D" id="1.20.1540.10">
    <property type="entry name" value="Rhomboid-like"/>
    <property type="match status" value="1"/>
</dbReference>
<dbReference type="InterPro" id="IPR022764">
    <property type="entry name" value="Peptidase_S54_rhomboid_dom"/>
</dbReference>
<dbReference type="InterPro" id="IPR035952">
    <property type="entry name" value="Rhomboid-like_sf"/>
</dbReference>
<dbReference type="InterPro" id="IPR015940">
    <property type="entry name" value="UBA"/>
</dbReference>
<dbReference type="InterPro" id="IPR009060">
    <property type="entry name" value="UBA-like_sf"/>
</dbReference>
<dbReference type="PANTHER" id="PTHR11009">
    <property type="entry name" value="DER1-LIKE PROTEIN, DERLIN"/>
    <property type="match status" value="1"/>
</dbReference>
<dbReference type="Pfam" id="PF01694">
    <property type="entry name" value="Rhomboid"/>
    <property type="match status" value="1"/>
</dbReference>
<dbReference type="Pfam" id="PF00627">
    <property type="entry name" value="UBA"/>
    <property type="match status" value="1"/>
</dbReference>
<dbReference type="SMART" id="SM00165">
    <property type="entry name" value="UBA"/>
    <property type="match status" value="1"/>
</dbReference>
<dbReference type="SUPFAM" id="SSF144091">
    <property type="entry name" value="Rhomboid-like"/>
    <property type="match status" value="1"/>
</dbReference>
<dbReference type="SUPFAM" id="SSF46934">
    <property type="entry name" value="UBA-like"/>
    <property type="match status" value="1"/>
</dbReference>
<dbReference type="PROSITE" id="PS50030">
    <property type="entry name" value="UBA"/>
    <property type="match status" value="1"/>
</dbReference>
<name>RBL15_ARATH</name>
<gene>
    <name evidence="5" type="primary">RBL15</name>
    <name evidence="6" type="synonym">RBL11</name>
    <name evidence="9" type="ordered locus">At3g58460</name>
    <name evidence="11" type="ORF">F14P22.50</name>
</gene>
<accession>Q8LB17</accession>
<accession>C0Z2U1</accession>
<accession>Q8L7A1</accession>
<accession>Q9M2H0</accession>
<sequence>MRPNIVTEAGVQTRVGQWWNAIPFLTSSVVVVCGVIYLICLLTGYDTFYEVCFLPSAIISRFQVYRFYTAIIFHGSLLHVLFNMMALVPMGSELERIMGSVRLLYLTVLLATTNAVLHLLIASLAGYNPFYQYDHLMNECAIGFSGILFSMIVIETSLSGVTSRSVFGLFNVPAKLYPWILLIVFQLLMTNVSLLGHLCGILSGFSYSYGLFNFLMPGSSFFTTIESASWMSSFIRRPKFIMCTGGNPSSYIPTYSAQNTTSSGFSTGNAWRSLSSWLPQREASNQSSEDSRFPGRGRTLSTARDPTAPAGETDPNLHARLLEDSSSPDRLSDATVNTVADSRQAPIANAAVLPQSQGRVAASEEQIQKLVAMGFDRTQVEVALAAADDDLTVAVEILMSQQA</sequence>
<keyword id="KW-0002">3D-structure</keyword>
<keyword id="KW-0025">Alternative splicing</keyword>
<keyword id="KW-0378">Hydrolase</keyword>
<keyword id="KW-0472">Membrane</keyword>
<keyword id="KW-0645">Protease</keyword>
<keyword id="KW-1185">Reference proteome</keyword>
<keyword id="KW-0812">Transmembrane</keyword>
<keyword id="KW-1133">Transmembrane helix</keyword>
<evidence type="ECO:0000250" key="1">
    <source>
        <dbReference type="UniProtKB" id="P54493"/>
    </source>
</evidence>
<evidence type="ECO:0000255" key="2"/>
<evidence type="ECO:0000255" key="3">
    <source>
        <dbReference type="PROSITE-ProRule" id="PRU00212"/>
    </source>
</evidence>
<evidence type="ECO:0000256" key="4">
    <source>
        <dbReference type="SAM" id="MobiDB-lite"/>
    </source>
</evidence>
<evidence type="ECO:0000303" key="5">
    <source>
    </source>
</evidence>
<evidence type="ECO:0000303" key="6">
    <source>
    </source>
</evidence>
<evidence type="ECO:0000303" key="7">
    <source>
    </source>
</evidence>
<evidence type="ECO:0000305" key="8"/>
<evidence type="ECO:0000312" key="9">
    <source>
        <dbReference type="Araport" id="AT3G58460"/>
    </source>
</evidence>
<evidence type="ECO:0000312" key="10">
    <source>
        <dbReference type="EMBL" id="BAH57020.1"/>
    </source>
</evidence>
<evidence type="ECO:0000312" key="11">
    <source>
        <dbReference type="EMBL" id="CAB68184.1"/>
    </source>
</evidence>
<evidence type="ECO:0007829" key="12">
    <source>
        <dbReference type="PDB" id="1VG5"/>
    </source>
</evidence>